<feature type="signal peptide" evidence="2">
    <location>
        <begin position="1"/>
        <end position="26"/>
    </location>
</feature>
<feature type="chain" id="PRO_0000278558" description="Iron uptake system component EfeO">
    <location>
        <begin position="27"/>
        <end position="375"/>
    </location>
</feature>
<protein>
    <recommendedName>
        <fullName>Iron uptake system component EfeO</fullName>
    </recommendedName>
</protein>
<keyword id="KW-0574">Periplasm</keyword>
<keyword id="KW-0732">Signal</keyword>
<dbReference type="EMBL" id="CP000036">
    <property type="protein sequence ID" value="ABB66623.1"/>
    <property type="molecule type" value="Genomic_DNA"/>
</dbReference>
<dbReference type="RefSeq" id="WP_000154358.1">
    <property type="nucleotide sequence ID" value="NC_007613.1"/>
</dbReference>
<dbReference type="SMR" id="Q31Z85"/>
<dbReference type="KEGG" id="sbo:SBO_2040"/>
<dbReference type="HOGENOM" id="CLU_050342_2_1_6"/>
<dbReference type="Proteomes" id="UP000007067">
    <property type="component" value="Chromosome"/>
</dbReference>
<dbReference type="GO" id="GO:0042597">
    <property type="term" value="C:periplasmic space"/>
    <property type="evidence" value="ECO:0007669"/>
    <property type="project" value="UniProtKB-SubCell"/>
</dbReference>
<dbReference type="CDD" id="cd14656">
    <property type="entry name" value="Imelysin-like_EfeO"/>
    <property type="match status" value="1"/>
</dbReference>
<dbReference type="FunFam" id="1.20.1420.20:FF:000001">
    <property type="entry name" value="Iron uptake system component EfeO"/>
    <property type="match status" value="1"/>
</dbReference>
<dbReference type="FunFam" id="2.60.40.420:FF:000052">
    <property type="entry name" value="Iron uptake system component EfeO"/>
    <property type="match status" value="1"/>
</dbReference>
<dbReference type="Gene3D" id="2.60.40.420">
    <property type="entry name" value="Cupredoxins - blue copper proteins"/>
    <property type="match status" value="1"/>
</dbReference>
<dbReference type="Gene3D" id="1.20.1420.20">
    <property type="entry name" value="M75 peptidase, HXXE motif"/>
    <property type="match status" value="1"/>
</dbReference>
<dbReference type="InterPro" id="IPR008972">
    <property type="entry name" value="Cupredoxin"/>
</dbReference>
<dbReference type="InterPro" id="IPR050894">
    <property type="entry name" value="EfeM/EfeO_iron_uptake"/>
</dbReference>
<dbReference type="InterPro" id="IPR028096">
    <property type="entry name" value="EfeO_Cupredoxin"/>
</dbReference>
<dbReference type="InterPro" id="IPR018976">
    <property type="entry name" value="Imelysin-like"/>
</dbReference>
<dbReference type="InterPro" id="IPR034981">
    <property type="entry name" value="Imelysin-like_EfeO/Algp7"/>
</dbReference>
<dbReference type="InterPro" id="IPR038352">
    <property type="entry name" value="Imelysin_sf"/>
</dbReference>
<dbReference type="InterPro" id="IPR053377">
    <property type="entry name" value="Iron_uptake_EfeM/EfeO"/>
</dbReference>
<dbReference type="NCBIfam" id="NF041757">
    <property type="entry name" value="EfeO"/>
    <property type="match status" value="1"/>
</dbReference>
<dbReference type="NCBIfam" id="NF007697">
    <property type="entry name" value="PRK10378.1"/>
    <property type="match status" value="1"/>
</dbReference>
<dbReference type="PANTHER" id="PTHR39192">
    <property type="entry name" value="IRON UPTAKE SYSTEM COMPONENT EFEO"/>
    <property type="match status" value="1"/>
</dbReference>
<dbReference type="PANTHER" id="PTHR39192:SF1">
    <property type="entry name" value="IRON UPTAKE SYSTEM COMPONENT EFEO"/>
    <property type="match status" value="1"/>
</dbReference>
<dbReference type="Pfam" id="PF13473">
    <property type="entry name" value="Cupredoxin_1"/>
    <property type="match status" value="1"/>
</dbReference>
<dbReference type="Pfam" id="PF09375">
    <property type="entry name" value="Peptidase_M75"/>
    <property type="match status" value="1"/>
</dbReference>
<dbReference type="SUPFAM" id="SSF49503">
    <property type="entry name" value="Cupredoxins"/>
    <property type="match status" value="1"/>
</dbReference>
<reference key="1">
    <citation type="journal article" date="2005" name="Nucleic Acids Res.">
        <title>Genome dynamics and diversity of Shigella species, the etiologic agents of bacillary dysentery.</title>
        <authorList>
            <person name="Yang F."/>
            <person name="Yang J."/>
            <person name="Zhang X."/>
            <person name="Chen L."/>
            <person name="Jiang Y."/>
            <person name="Yan Y."/>
            <person name="Tang X."/>
            <person name="Wang J."/>
            <person name="Xiong Z."/>
            <person name="Dong J."/>
            <person name="Xue Y."/>
            <person name="Zhu Y."/>
            <person name="Xu X."/>
            <person name="Sun L."/>
            <person name="Chen S."/>
            <person name="Nie H."/>
            <person name="Peng J."/>
            <person name="Xu J."/>
            <person name="Wang Y."/>
            <person name="Yuan Z."/>
            <person name="Wen Y."/>
            <person name="Yao Z."/>
            <person name="Shen Y."/>
            <person name="Qiang B."/>
            <person name="Hou Y."/>
            <person name="Yu J."/>
            <person name="Jin Q."/>
        </authorList>
    </citation>
    <scope>NUCLEOTIDE SEQUENCE [LARGE SCALE GENOMIC DNA]</scope>
    <source>
        <strain>Sb227</strain>
    </source>
</reference>
<organism>
    <name type="scientific">Shigella boydii serotype 4 (strain Sb227)</name>
    <dbReference type="NCBI Taxonomy" id="300268"/>
    <lineage>
        <taxon>Bacteria</taxon>
        <taxon>Pseudomonadati</taxon>
        <taxon>Pseudomonadota</taxon>
        <taxon>Gammaproteobacteria</taxon>
        <taxon>Enterobacterales</taxon>
        <taxon>Enterobacteriaceae</taxon>
        <taxon>Shigella</taxon>
    </lineage>
</organism>
<proteinExistence type="inferred from homology"/>
<sequence length="375" mass="41100">MTINFCRNALQLSVAALFSSAFMANAADVPQVKVTVTDKQCEPMTITVNAGKTQFIIQNHSQKALEWEILKGVMVVEERENIAPGFSQKMTANLQPGEYDMTCGLLTNPKGKLIVKGEATADAAQSDALLSLGGAITAYKAYVMAETTQLVTDTKAFTDAIKAGDIEKAKALYAPTRQHYERIEPIAELFSDLDGSIDAREDDYEQKAADPKFTGFHRLEKALFGDNTTKGMDQYAEQLYTDVVDLQKRISELAFPPSKVVGGAAGLIEEVAASKISGEEDRYSHTDLWDFQANVEGSQKIVDLLRPQLQKANPELLAKVDANFKKVDTILAKYRTKDGFETYDKLTDADRNALKGPITAQAEDLAQLRGVLGLD</sequence>
<comment type="function">
    <text evidence="1">Involved in Fe(2+) uptake. Could be an iron-binding and/or electron-transfer component (By similarity).</text>
</comment>
<comment type="subunit">
    <text evidence="1">Monomer. Part of a ferrous iron transporter composed of EfeU, EfeO and EfeB (By similarity).</text>
</comment>
<comment type="subcellular location">
    <subcellularLocation>
        <location evidence="1">Periplasm</location>
    </subcellularLocation>
</comment>
<comment type="similarity">
    <text evidence="3">Belongs to the EfeM/EfeO family.</text>
</comment>
<name>EFEO_SHIBS</name>
<gene>
    <name type="primary">efeO</name>
    <name type="ordered locus">SBO_2040</name>
</gene>
<accession>Q31Z85</accession>
<evidence type="ECO:0000250" key="1"/>
<evidence type="ECO:0000255" key="2"/>
<evidence type="ECO:0000305" key="3"/>